<protein>
    <recommendedName>
        <fullName evidence="11">Chitin synthase V</fullName>
        <ecNumber evidence="13">2.4.1.16</ecNumber>
    </recommendedName>
    <alternativeName>
        <fullName evidence="12">Chitin-UDP acetyl-glucosaminyl transferase V</fullName>
    </alternativeName>
    <alternativeName>
        <fullName evidence="11">Class-V chitin synthase V</fullName>
    </alternativeName>
</protein>
<dbReference type="EC" id="2.4.1.16" evidence="13"/>
<dbReference type="EMBL" id="AF484941">
    <property type="protein sequence ID" value="AAO49384.1"/>
    <property type="status" value="ALT_SEQ"/>
    <property type="molecule type" value="Genomic_DNA"/>
</dbReference>
<dbReference type="EMBL" id="DS231699">
    <property type="protein sequence ID" value="KNB00664.1"/>
    <property type="molecule type" value="Genomic_DNA"/>
</dbReference>
<dbReference type="RefSeq" id="XP_018238709.1">
    <property type="nucleotide sequence ID" value="XM_018382063.1"/>
</dbReference>
<dbReference type="SMR" id="A0A0J9UMG2"/>
<dbReference type="CAZy" id="GT2">
    <property type="family name" value="Glycosyltransferase Family 2"/>
</dbReference>
<dbReference type="EnsemblFungi" id="FOXG_04162T0">
    <property type="protein sequence ID" value="FOXG_04162P0"/>
    <property type="gene ID" value="FOXG_04162"/>
</dbReference>
<dbReference type="GeneID" id="28946226"/>
<dbReference type="VEuPathDB" id="FungiDB:FOC1_g10006724"/>
<dbReference type="VEuPathDB" id="FungiDB:FOC4_g10006856"/>
<dbReference type="VEuPathDB" id="FungiDB:FOIG_06738"/>
<dbReference type="VEuPathDB" id="FungiDB:FOMG_03024"/>
<dbReference type="VEuPathDB" id="FungiDB:FOXG_04162"/>
<dbReference type="VEuPathDB" id="FungiDB:FOZG_02948"/>
<dbReference type="VEuPathDB" id="FungiDB:HZS61_014281"/>
<dbReference type="OMA" id="LEMHHQI"/>
<dbReference type="PHI-base" id="PHI:11290"/>
<dbReference type="PHI-base" id="PHI:285"/>
<dbReference type="PHI-base" id="PHI:7242"/>
<dbReference type="Proteomes" id="UP000009097">
    <property type="component" value="Unassembled WGS sequence"/>
</dbReference>
<dbReference type="GO" id="GO:0030428">
    <property type="term" value="C:cell septum"/>
    <property type="evidence" value="ECO:0007669"/>
    <property type="project" value="TreeGrafter"/>
</dbReference>
<dbReference type="GO" id="GO:0016459">
    <property type="term" value="C:myosin complex"/>
    <property type="evidence" value="ECO:0007669"/>
    <property type="project" value="UniProtKB-KW"/>
</dbReference>
<dbReference type="GO" id="GO:0005886">
    <property type="term" value="C:plasma membrane"/>
    <property type="evidence" value="ECO:0007669"/>
    <property type="project" value="UniProtKB-SubCell"/>
</dbReference>
<dbReference type="GO" id="GO:0003779">
    <property type="term" value="F:actin binding"/>
    <property type="evidence" value="ECO:0007669"/>
    <property type="project" value="UniProtKB-KW"/>
</dbReference>
<dbReference type="GO" id="GO:0005524">
    <property type="term" value="F:ATP binding"/>
    <property type="evidence" value="ECO:0007669"/>
    <property type="project" value="UniProtKB-KW"/>
</dbReference>
<dbReference type="GO" id="GO:0004100">
    <property type="term" value="F:chitin synthase activity"/>
    <property type="evidence" value="ECO:0007669"/>
    <property type="project" value="InterPro"/>
</dbReference>
<dbReference type="GO" id="GO:0003774">
    <property type="term" value="F:cytoskeletal motor activity"/>
    <property type="evidence" value="ECO:0007669"/>
    <property type="project" value="InterPro"/>
</dbReference>
<dbReference type="GO" id="GO:0006031">
    <property type="term" value="P:chitin biosynthetic process"/>
    <property type="evidence" value="ECO:0007669"/>
    <property type="project" value="TreeGrafter"/>
</dbReference>
<dbReference type="GO" id="GO:0031505">
    <property type="term" value="P:fungal-type cell wall organization"/>
    <property type="evidence" value="ECO:0007669"/>
    <property type="project" value="TreeGrafter"/>
</dbReference>
<dbReference type="CDD" id="cd14879">
    <property type="entry name" value="MYSc_Myo17"/>
    <property type="match status" value="1"/>
</dbReference>
<dbReference type="FunFam" id="1.10.10.60:FF:000337">
    <property type="entry name" value="Chitin synthase 8"/>
    <property type="match status" value="1"/>
</dbReference>
<dbReference type="FunFam" id="1.10.10.820:FF:000012">
    <property type="entry name" value="Chitin synthase ChsE"/>
    <property type="match status" value="1"/>
</dbReference>
<dbReference type="FunFam" id="1.20.58.530:FF:000017">
    <property type="entry name" value="Chitin synthase ChsE"/>
    <property type="match status" value="1"/>
</dbReference>
<dbReference type="FunFam" id="3.40.850.10:FF:000055">
    <property type="entry name" value="Chitin synthase ChsE"/>
    <property type="match status" value="1"/>
</dbReference>
<dbReference type="Gene3D" id="1.10.10.820">
    <property type="match status" value="1"/>
</dbReference>
<dbReference type="Gene3D" id="1.20.58.530">
    <property type="match status" value="1"/>
</dbReference>
<dbReference type="Gene3D" id="3.10.120.10">
    <property type="entry name" value="Cytochrome b5-like heme/steroid binding domain"/>
    <property type="match status" value="1"/>
</dbReference>
<dbReference type="Gene3D" id="1.10.10.60">
    <property type="entry name" value="Homeodomain-like"/>
    <property type="match status" value="1"/>
</dbReference>
<dbReference type="Gene3D" id="3.40.850.10">
    <property type="entry name" value="Kinesin motor domain"/>
    <property type="match status" value="1"/>
</dbReference>
<dbReference type="Gene3D" id="1.20.120.720">
    <property type="entry name" value="Myosin VI head, motor domain, U50 subdomain"/>
    <property type="match status" value="1"/>
</dbReference>
<dbReference type="InterPro" id="IPR004835">
    <property type="entry name" value="Chitin_synth"/>
</dbReference>
<dbReference type="InterPro" id="IPR001199">
    <property type="entry name" value="Cyt_B5-like_heme/steroid-bd"/>
</dbReference>
<dbReference type="InterPro" id="IPR036400">
    <property type="entry name" value="Cyt_B5-like_heme/steroid_sf"/>
</dbReference>
<dbReference type="InterPro" id="IPR014876">
    <property type="entry name" value="DEK_C"/>
</dbReference>
<dbReference type="InterPro" id="IPR036961">
    <property type="entry name" value="Kinesin_motor_dom_sf"/>
</dbReference>
<dbReference type="InterPro" id="IPR001609">
    <property type="entry name" value="Myosin_head_motor_dom-like"/>
</dbReference>
<dbReference type="InterPro" id="IPR036037">
    <property type="entry name" value="MYSc_Myo17"/>
</dbReference>
<dbReference type="InterPro" id="IPR029044">
    <property type="entry name" value="Nucleotide-diphossugar_trans"/>
</dbReference>
<dbReference type="InterPro" id="IPR027417">
    <property type="entry name" value="P-loop_NTPase"/>
</dbReference>
<dbReference type="PANTHER" id="PTHR22914">
    <property type="entry name" value="CHITIN SYNTHASE"/>
    <property type="match status" value="1"/>
</dbReference>
<dbReference type="PANTHER" id="PTHR22914:SF45">
    <property type="entry name" value="CHITIN SYNTHASE"/>
    <property type="match status" value="1"/>
</dbReference>
<dbReference type="Pfam" id="PF03142">
    <property type="entry name" value="Chitin_synth_2"/>
    <property type="match status" value="1"/>
</dbReference>
<dbReference type="Pfam" id="PF00173">
    <property type="entry name" value="Cyt-b5"/>
    <property type="match status" value="1"/>
</dbReference>
<dbReference type="Pfam" id="PF08766">
    <property type="entry name" value="DEK_C"/>
    <property type="match status" value="1"/>
</dbReference>
<dbReference type="Pfam" id="PF00063">
    <property type="entry name" value="Myosin_head"/>
    <property type="match status" value="1"/>
</dbReference>
<dbReference type="SMART" id="SM01117">
    <property type="entry name" value="Cyt-b5"/>
    <property type="match status" value="2"/>
</dbReference>
<dbReference type="SMART" id="SM00242">
    <property type="entry name" value="MYSc"/>
    <property type="match status" value="1"/>
</dbReference>
<dbReference type="SUPFAM" id="SSF55856">
    <property type="entry name" value="Cytochrome b5-like heme/steroid binding domain"/>
    <property type="match status" value="1"/>
</dbReference>
<dbReference type="SUPFAM" id="SSF109715">
    <property type="entry name" value="DEK C-terminal domain"/>
    <property type="match status" value="1"/>
</dbReference>
<dbReference type="SUPFAM" id="SSF53448">
    <property type="entry name" value="Nucleotide-diphospho-sugar transferases"/>
    <property type="match status" value="1"/>
</dbReference>
<dbReference type="SUPFAM" id="SSF52540">
    <property type="entry name" value="P-loop containing nucleoside triphosphate hydrolases"/>
    <property type="match status" value="1"/>
</dbReference>
<dbReference type="PROSITE" id="PS50255">
    <property type="entry name" value="CYTOCHROME_B5_2"/>
    <property type="match status" value="1"/>
</dbReference>
<dbReference type="PROSITE" id="PS51998">
    <property type="entry name" value="DEK_C"/>
    <property type="match status" value="1"/>
</dbReference>
<dbReference type="PROSITE" id="PS51456">
    <property type="entry name" value="MYOSIN_MOTOR"/>
    <property type="match status" value="1"/>
</dbReference>
<name>CHS5_FUSO4</name>
<evidence type="ECO:0000255" key="1"/>
<evidence type="ECO:0000255" key="2">
    <source>
        <dbReference type="PROSITE-ProRule" id="PRU00279"/>
    </source>
</evidence>
<evidence type="ECO:0000255" key="3">
    <source>
        <dbReference type="PROSITE-ProRule" id="PRU00498"/>
    </source>
</evidence>
<evidence type="ECO:0000255" key="4">
    <source>
        <dbReference type="PROSITE-ProRule" id="PRU00782"/>
    </source>
</evidence>
<evidence type="ECO:0000255" key="5">
    <source>
        <dbReference type="PROSITE-ProRule" id="PRU01342"/>
    </source>
</evidence>
<evidence type="ECO:0000256" key="6">
    <source>
        <dbReference type="SAM" id="MobiDB-lite"/>
    </source>
</evidence>
<evidence type="ECO:0000269" key="7">
    <source>
    </source>
</evidence>
<evidence type="ECO:0000269" key="8">
    <source>
    </source>
</evidence>
<evidence type="ECO:0000269" key="9">
    <source>
    </source>
</evidence>
<evidence type="ECO:0000269" key="10">
    <source>
    </source>
</evidence>
<evidence type="ECO:0000303" key="11">
    <source>
    </source>
</evidence>
<evidence type="ECO:0000305" key="12"/>
<evidence type="ECO:0000305" key="13">
    <source>
    </source>
</evidence>
<proteinExistence type="evidence at transcript level"/>
<organism>
    <name type="scientific">Fusarium oxysporum f. sp. lycopersici (strain 4287 / CBS 123668 / FGSC 9935 / NRRL 34936)</name>
    <name type="common">Fusarium vascular wilt of tomato</name>
    <dbReference type="NCBI Taxonomy" id="426428"/>
    <lineage>
        <taxon>Eukaryota</taxon>
        <taxon>Fungi</taxon>
        <taxon>Dikarya</taxon>
        <taxon>Ascomycota</taxon>
        <taxon>Pezizomycotina</taxon>
        <taxon>Sordariomycetes</taxon>
        <taxon>Hypocreomycetidae</taxon>
        <taxon>Hypocreales</taxon>
        <taxon>Nectriaceae</taxon>
        <taxon>Fusarium</taxon>
        <taxon>Fusarium oxysporum species complex</taxon>
    </lineage>
</organism>
<comment type="function">
    <text evidence="7 8 9 10 13">Polymerizes chitin, a structural polymer of the cell wall and septum, by transferring the sugar moiety of UDP-GlcNAc to the non-reducing end of the growing chitin polymer (Probable). ChsV and chsVb do perform additive, but not redundant, functions in septum formation (PubMed:17993572). Involved in cell wall integrity and resistance to antimicrobial plant defense compounds such as the tomato phytoanticipin alpha-tomatine or H(2)O(2), and plays a crucial role in vascular colonization and pathogenicity (PubMed:12492869, PubMed:20618706). Also plays an important role in nuclear sorting or distribution (PubMed:15470098).</text>
</comment>
<comment type="catalytic activity">
    <reaction evidence="13">
        <text>[(1-&gt;4)-N-acetyl-beta-D-glucosaminyl](n) + UDP-N-acetyl-alpha-D-glucosamine = [(1-&gt;4)-N-acetyl-beta-D-glucosaminyl](n+1) + UDP + H(+)</text>
        <dbReference type="Rhea" id="RHEA:16637"/>
        <dbReference type="Rhea" id="RHEA-COMP:9593"/>
        <dbReference type="Rhea" id="RHEA-COMP:9595"/>
        <dbReference type="ChEBI" id="CHEBI:15378"/>
        <dbReference type="ChEBI" id="CHEBI:17029"/>
        <dbReference type="ChEBI" id="CHEBI:57705"/>
        <dbReference type="ChEBI" id="CHEBI:58223"/>
        <dbReference type="EC" id="2.4.1.16"/>
    </reaction>
    <physiologicalReaction direction="left-to-right" evidence="13">
        <dbReference type="Rhea" id="RHEA:16638"/>
    </physiologicalReaction>
</comment>
<comment type="subcellular location">
    <subcellularLocation>
        <location evidence="12">Cell membrane</location>
        <topology evidence="1">Multi-pass membrane protein</topology>
    </subcellularLocation>
</comment>
<comment type="induction">
    <text evidence="7">Expression is increased in the presence of sorbitol or the tomato phytoanticipin alpha-tomatine, but does not depend on the fmk1 signaling pathway.</text>
</comment>
<comment type="disruption phenotype">
    <text evidence="7 8 9 10">Leads to morphological abnormalities such as hyphal swellings that are indicative of alterations in cell wall structure (PubMed:12492869). Abolishes the ability to infect and colonize tomato plants or to grow invasively on tomato fruit tissue (PubMed:12492869). Also leads to hypersensitivity to plant antimicrobial defense compounds such as the tomato phytoanticipin alpha-tomatine or H(2)O(2) (PubMed:12492869). Does not affect hyphal hydrophobicity but leads to compartments containing up to eight nuclei (PubMed:15470098). Is still able to penetrate tomato roots, grow efficiently inside plant cells and elicit the plant defense response (PubMed:20618706). Induces the expression of chsVb (PubMed:17993572).</text>
</comment>
<comment type="similarity">
    <text evidence="12">In the N-terminal section; belongs to the TRAFAC class myosin-kinesin ATPase superfamily. Myosin family.</text>
</comment>
<comment type="similarity">
    <text evidence="12">In the C-terminal section; belongs to the chitin synthase family. Class V subfamily.</text>
</comment>
<comment type="sequence caution" evidence="12">
    <conflict type="erroneous gene model prediction">
        <sequence resource="EMBL-CDS" id="AAO49384"/>
    </conflict>
</comment>
<keyword id="KW-0009">Actin-binding</keyword>
<keyword id="KW-0067">ATP-binding</keyword>
<keyword id="KW-1003">Cell membrane</keyword>
<keyword id="KW-0325">Glycoprotein</keyword>
<keyword id="KW-0328">Glycosyltransferase</keyword>
<keyword id="KW-0472">Membrane</keyword>
<keyword id="KW-0505">Motor protein</keyword>
<keyword id="KW-0518">Myosin</keyword>
<keyword id="KW-0547">Nucleotide-binding</keyword>
<keyword id="KW-1185">Reference proteome</keyword>
<keyword id="KW-0808">Transferase</keyword>
<keyword id="KW-0812">Transmembrane</keyword>
<keyword id="KW-1133">Transmembrane helix</keyword>
<keyword id="KW-0843">Virulence</keyword>
<accession>A0A0J9UMG2</accession>
<accession>Q873Z8</accession>
<gene>
    <name evidence="11" type="primary">chsV</name>
    <name type="ORF">FOXG_04162</name>
</gene>
<feature type="chain" id="PRO_0000460831" description="Chitin synthase V">
    <location>
        <begin position="1"/>
        <end position="1862"/>
    </location>
</feature>
<feature type="transmembrane region" description="Helical" evidence="1">
    <location>
        <begin position="884"/>
        <end position="904"/>
    </location>
</feature>
<feature type="transmembrane region" description="Helical" evidence="1">
    <location>
        <begin position="923"/>
        <end position="943"/>
    </location>
</feature>
<feature type="transmembrane region" description="Helical" evidence="1">
    <location>
        <begin position="1202"/>
        <end position="1222"/>
    </location>
</feature>
<feature type="transmembrane region" description="Helical" evidence="1">
    <location>
        <begin position="1590"/>
        <end position="1610"/>
    </location>
</feature>
<feature type="transmembrane region" description="Helical" evidence="1">
    <location>
        <begin position="1623"/>
        <end position="1643"/>
    </location>
</feature>
<feature type="transmembrane region" description="Helical" evidence="1">
    <location>
        <begin position="1650"/>
        <end position="1670"/>
    </location>
</feature>
<feature type="domain" description="Myosin motor" evidence="4">
    <location>
        <begin position="1"/>
        <end position="778"/>
    </location>
</feature>
<feature type="domain" description="Cytochrome b5 heme-binding" evidence="2">
    <location>
        <begin position="947"/>
        <end position="1009"/>
    </location>
</feature>
<feature type="domain" description="DEK-C" evidence="5">
    <location>
        <begin position="1804"/>
        <end position="1859"/>
    </location>
</feature>
<feature type="region of interest" description="Disordered" evidence="6">
    <location>
        <begin position="1"/>
        <end position="26"/>
    </location>
</feature>
<feature type="region of interest" description="Disordered" evidence="6">
    <location>
        <begin position="592"/>
        <end position="643"/>
    </location>
</feature>
<feature type="region of interest" description="Actin-binding" evidence="4">
    <location>
        <begin position="658"/>
        <end position="682"/>
    </location>
</feature>
<feature type="binding site" evidence="4">
    <location>
        <begin position="104"/>
        <end position="111"/>
    </location>
    <ligand>
        <name>ATP</name>
        <dbReference type="ChEBI" id="CHEBI:30616"/>
    </ligand>
</feature>
<feature type="glycosylation site" description="N-linked (GlcNAc...) asparagine" evidence="3">
    <location>
        <position position="63"/>
    </location>
</feature>
<feature type="glycosylation site" description="N-linked (GlcNAc...) asparagine" evidence="3">
    <location>
        <position position="123"/>
    </location>
</feature>
<feature type="glycosylation site" description="N-linked (GlcNAc...) asparagine" evidence="3">
    <location>
        <position position="429"/>
    </location>
</feature>
<feature type="glycosylation site" description="N-linked (GlcNAc...) asparagine" evidence="3">
    <location>
        <position position="483"/>
    </location>
</feature>
<feature type="glycosylation site" description="N-linked (GlcNAc...) asparagine" evidence="3">
    <location>
        <position position="522"/>
    </location>
</feature>
<feature type="glycosylation site" description="N-linked (GlcNAc...) asparagine" evidence="3">
    <location>
        <position position="560"/>
    </location>
</feature>
<feature type="glycosylation site" description="N-linked (GlcNAc...) asparagine" evidence="3">
    <location>
        <position position="1036"/>
    </location>
</feature>
<feature type="glycosylation site" description="N-linked (GlcNAc...) asparagine" evidence="3">
    <location>
        <position position="1063"/>
    </location>
</feature>
<feature type="glycosylation site" description="N-linked (GlcNAc...) asparagine" evidence="3">
    <location>
        <position position="1192"/>
    </location>
</feature>
<feature type="glycosylation site" description="N-linked (GlcNAc...) asparagine" evidence="3">
    <location>
        <position position="1459"/>
    </location>
</feature>
<feature type="glycosylation site" description="N-linked (GlcNAc...) asparagine" evidence="3">
    <location>
        <position position="1565"/>
    </location>
</feature>
<feature type="glycosylation site" description="N-linked (GlcNAc...) asparagine" evidence="3">
    <location>
        <position position="1771"/>
    </location>
</feature>
<feature type="sequence conflict" description="In Ref. 1; AAO49384." evidence="12" ref="1">
    <original>A</original>
    <variation>P</variation>
    <location>
        <position position="730"/>
    </location>
</feature>
<feature type="sequence conflict" description="In Ref. 1; AAO49384." evidence="12" ref="1">
    <original>S</original>
    <variation>P</variation>
    <location>
        <position position="1298"/>
    </location>
</feature>
<feature type="sequence conflict" description="In Ref. 1; AAO49384." evidence="12" ref="1">
    <original>V</original>
    <variation>A</variation>
    <location>
        <position position="1696"/>
    </location>
</feature>
<reference key="1">
    <citation type="journal article" date="2003" name="Mol. Microbiol.">
        <title>Class V chitin synthase determines pathogenesis in the vascular wilt fungus Fusarium oxysporum and mediates resistance to plant defence compounds.</title>
        <authorList>
            <person name="Madrid M.P."/>
            <person name="Di Pietro A."/>
            <person name="Roncero M.I."/>
        </authorList>
    </citation>
    <scope>NUCLEOTIDE SEQUENCE [GENOMIC DNA]</scope>
    <scope>INDUCTION</scope>
    <scope>FUNCTION</scope>
    <scope>DISRUPTION PHENOTYPE</scope>
    <source>
        <strain>4287 / CBS 123668 / FGSC 9935 / NRRL 34936</strain>
    </source>
</reference>
<reference key="2">
    <citation type="journal article" date="2010" name="Nature">
        <title>Comparative genomics reveals mobile pathogenicity chromosomes in Fusarium.</title>
        <authorList>
            <person name="Ma L.-J."/>
            <person name="van der Does H.C."/>
            <person name="Borkovich K.A."/>
            <person name="Coleman J.J."/>
            <person name="Daboussi M.-J."/>
            <person name="Di Pietro A."/>
            <person name="Dufresne M."/>
            <person name="Freitag M."/>
            <person name="Grabherr M."/>
            <person name="Henrissat B."/>
            <person name="Houterman P.M."/>
            <person name="Kang S."/>
            <person name="Shim W.-B."/>
            <person name="Woloshuk C."/>
            <person name="Xie X."/>
            <person name="Xu J.-R."/>
            <person name="Antoniw J."/>
            <person name="Baker S.E."/>
            <person name="Bluhm B.H."/>
            <person name="Breakspear A."/>
            <person name="Brown D.W."/>
            <person name="Butchko R.A.E."/>
            <person name="Chapman S."/>
            <person name="Coulson R."/>
            <person name="Coutinho P.M."/>
            <person name="Danchin E.G.J."/>
            <person name="Diener A."/>
            <person name="Gale L.R."/>
            <person name="Gardiner D.M."/>
            <person name="Goff S."/>
            <person name="Hammond-Kosack K.E."/>
            <person name="Hilburn K."/>
            <person name="Hua-Van A."/>
            <person name="Jonkers W."/>
            <person name="Kazan K."/>
            <person name="Kodira C.D."/>
            <person name="Koehrsen M."/>
            <person name="Kumar L."/>
            <person name="Lee Y.-H."/>
            <person name="Li L."/>
            <person name="Manners J.M."/>
            <person name="Miranda-Saavedra D."/>
            <person name="Mukherjee M."/>
            <person name="Park G."/>
            <person name="Park J."/>
            <person name="Park S.-Y."/>
            <person name="Proctor R.H."/>
            <person name="Regev A."/>
            <person name="Ruiz-Roldan M.C."/>
            <person name="Sain D."/>
            <person name="Sakthikumar S."/>
            <person name="Sykes S."/>
            <person name="Schwartz D.C."/>
            <person name="Turgeon B.G."/>
            <person name="Wapinski I."/>
            <person name="Yoder O."/>
            <person name="Young S."/>
            <person name="Zeng Q."/>
            <person name="Zhou S."/>
            <person name="Galagan J."/>
            <person name="Cuomo C.A."/>
            <person name="Kistler H.C."/>
            <person name="Rep M."/>
        </authorList>
    </citation>
    <scope>NUCLEOTIDE SEQUENCE [LARGE SCALE GENOMIC DNA]</scope>
    <source>
        <strain>4287 / CBS 123668 / FGSC 9935 / NRRL 34936</strain>
    </source>
</reference>
<reference key="3">
    <citation type="journal article" date="2004" name="Microbiology">
        <title>Role of chitin synthase genes in Fusarium oxysporum.</title>
        <authorList>
            <person name="Martin-Udiroz M."/>
            <person name="Madrid M.P."/>
            <person name="Roncero M.I.G."/>
        </authorList>
    </citation>
    <scope>FUNCTION</scope>
    <scope>DISRUPTION PHENOTYPE</scope>
    <source>
        <strain>4287 / CBS 123668 / FGSC 9935 / NRRL 34936</strain>
    </source>
</reference>
<reference key="4">
    <citation type="journal article" date="2007" name="Eukaryot. Cell">
        <title>ChsVb, a class VII chitin synthase involved in septation, is critical for pathogenicity in Fusarium oxysporum.</title>
        <authorList>
            <person name="Martin-Urdiroz M."/>
            <person name="Roncero M.I."/>
            <person name="Gonzalez-Reyes J.A."/>
            <person name="Ruiz-Roldan C."/>
        </authorList>
    </citation>
    <scope>FUNCTION</scope>
    <scope>DISRUPTION PHENOTYPE</scope>
    <source>
        <strain>4287 / CBS 123668 / FGSC 9935 / NRRL 34936</strain>
    </source>
</reference>
<reference key="5">
    <citation type="journal article" date="2010" name="Mol. Plant Pathol.">
        <title>Chitin synthase-deficient mutant of Fusarium oxysporum elicits tomato plant defence response and protects against wild-type infection.</title>
        <authorList>
            <person name="Pareja-Jaime Y."/>
            <person name="Martin-Urdiroz M."/>
            <person name="Roncero M.I."/>
            <person name="Gonzalez-Reyes J.A."/>
            <person name="Roldan C."/>
        </authorList>
    </citation>
    <scope>FUNCTION</scope>
    <scope>DISRUPTION PHENOTYPE</scope>
</reference>
<sequence length="1862" mass="206926">MAMSLPQLGGAGGPHTQPSLPSLPAHLQSDTHLTAHLASRFHVSHPTARLSSHALISLNTYTNSSKGPDGGKEGSAMAGAEEIADRAFLRLGHRSENQAVVFLGESGAGKSTIRAHLLTALLNKSSTPLSTKLSLAAYVFDSLTTTKTATTPTASKSGLFYELQYDTSATTNPVLIGGKLLDHRLERSRIADVPTGERNFHVLYYLLAGTSEAEKSHLGLDGGSATGTTQKRWKYLGHPTQLKVGINDAEGFQVFKNALRKLEFPRAEIAEICQILASILHIGQLEFETTSQTSVTGDDSGGFSHEGGTTITAVKNKDVLSIIAAFLGVSAADLQTTLGYKTKMIHRERVTVMLDPNGARAHAGELARTLYSLLVAWILETINQRLCAPEESIANTVSIVDFPGFCQQTPTGSALDQLLNNAATECIYNLTLQNFFDRKADMLESEEVSVAATSYFDNSDAVRGILKPGNGLLSILDDQTRRNRTDMQFLEALRRRFDGKNAAIEVGSAQAKLPGSNFMTENTSAVFTVKHFAGEVDYPVKGLIEENGEIISGDLLNMINGTKSEFVARLFGQDALQTVTHPNERTTVMQATVSSKPMRAPSVMSRKTHRTGRPSTAYKRQQQEAMEELDQQSQAGESKKNAKMTLEQGASGQFLASLDNVQKAVTDPGTNSYFVFCLKPNDRRIANQFDSKCVRMQVQTFGIAEISQRLRSADFSLFLPFGEFLGMTDAETILVGSERERAEMVIEEKQWPQNEVRVGATGVFLSERCWMEIAQLGEAVSVSGRYGGLPSSDAGDGLTPAESMAFGASKEHLVSGGNTPLMYGEKAKGGYFTDDTRSEAGVSAFGGGDMFKNLDTREQMAERGNEKSLEEVEEYRDKPSRKRWVALVFFLTWFIPDFAIRLIGRMPRKDVRMAWREKVAINMLIWLMCAVAAFFMVGFPMLICPKQYVYSSNELSSYDGDKGSKGAYVAIRGFVIDLNAFIPNHYPGSNLVSEDTLLNYAGKDISALFPIQVSALCQGKDGQIPPEVTLDNRNTNITGQPQLLASRDIDVNSVYHDFRYFTNDSRPDWYFEQMYTFKHVYLKGRMGYSPKYVKKLARDSSWNVVTIHGKVYDMTKYLQGGLRLKAKAGKPTPNIPGATDFMEDSVVQLFRSAKGQDVSKYWDNIKLSPVKKQRMETCLNNLFYIGDSDTRNSTRCQFATYFILAISVMLASILVFKFLAALQFGGKNVPENLDKFVMCMIPAYTEDEDSLRRAIDSLSRMKYDDKRKLLVVVCDGMIIGQGNDRPTPRIVLDILGVSETVDPEPLSFESLGEGMKQHNMGKIYSGLYEVQGHIVPFMVIVKVGKPSEVSRPGNRGKRDSQMVLMRFLNRVHYNLAMSPMELEMYHQIRNIIGVNPTFYEYLFQIDADTVVAADSATRMISAFIDDTRLIACCGETALTNAKGSFITMIQVYEYWISHNLSKAFESLFGSVTCLPGCFSMYRIRAAETGKPLFVSKEIVEDYSTIRVDTLHMKNLLHLGEDRYLTTLLLKYHSKYKTKYLFSAQAWTIAPDSWSVFLSQRRRWINSTVHNLAELIPLAQLCGFCCFSMRFVVFIDLLSTIVQPVIVMYIVYLIYQVATNPSVVPITAFLLLGAIYGLQAVIFILRRKWEMVGWMIMYIAAIPVFSFGLPLYSFWHMDDFNWGNTRVIAGEAGKKIVVSDEGKFDPNSIPRKKWEEYQAELWETQTQTARDDVRSEISGYSYATKAQGPFSEYGGGYQPSRPGSTAGFGHQNMSRMSLAHSEMPGNRASQFGGSQFFSPEDLVGMPSDDALLAEIRDILKTADLMTVTKKGIKQELERRFNVPLDAKRAYINSATEALLSGQL</sequence>